<gene>
    <name type="primary">P26</name>
</gene>
<organismHost>
    <name type="scientific">Beta macrocarpa</name>
    <name type="common">Beet</name>
    <name type="synonym">Beta vulgaris subsp. macrocarpa</name>
    <dbReference type="NCBI Taxonomy" id="343494"/>
</organismHost>
<organismHost>
    <name type="scientific">Beta vulgaris</name>
    <name type="common">Sugar beet</name>
    <dbReference type="NCBI Taxonomy" id="161934"/>
</organismHost>
<organismHost>
    <name type="scientific">Spinacia oleracea</name>
    <name type="common">Spinach</name>
    <dbReference type="NCBI Taxonomy" id="3562"/>
</organismHost>
<evidence type="ECO:0000269" key="1">
    <source>
    </source>
</evidence>
<evidence type="ECO:0000305" key="2"/>
<keyword id="KW-1035">Host cytoplasm</keyword>
<keyword id="KW-1048">Host nucleus</keyword>
<keyword id="KW-1185">Reference proteome</keyword>
<sequence>MDIDHCMPVFDMAYSDDNHLPYYIQRSTHHVVRDVDYTGFICYPLQVDLNDNVEVGADIYHMKIKTMRFNVDIYNNDVATKFPGWVRFIVFCTPPVSSWVNDGCSSLFSPFVGVNSFIDPKLLKRDGHGITVLHDGIYCLCHQEHFTRSFEFNFRGPGNYTLTSDVCWSPATNVDSIYVACVASWCGDSAFMLQSDSVSWVHKRFWQRPVLEFGQCLDDLPDHDNDCG</sequence>
<dbReference type="EMBL" id="D63936">
    <property type="protein sequence ID" value="BAA09969.1"/>
    <property type="molecule type" value="Genomic_RNA"/>
</dbReference>
<dbReference type="RefSeq" id="NP_612614.1">
    <property type="nucleotide sequence ID" value="NC_003513.1"/>
</dbReference>
<dbReference type="KEGG" id="vg:991081"/>
<dbReference type="Proteomes" id="UP000001100">
    <property type="component" value="Genome"/>
</dbReference>
<dbReference type="GO" id="GO:0030430">
    <property type="term" value="C:host cell cytoplasm"/>
    <property type="evidence" value="ECO:0007669"/>
    <property type="project" value="UniProtKB-SubCell"/>
</dbReference>
<dbReference type="GO" id="GO:0042025">
    <property type="term" value="C:host cell nucleus"/>
    <property type="evidence" value="ECO:0007669"/>
    <property type="project" value="UniProtKB-SubCell"/>
</dbReference>
<dbReference type="InterPro" id="IPR008419">
    <property type="entry name" value="BNYVV_p25/p26"/>
</dbReference>
<dbReference type="Pfam" id="PF05744">
    <property type="entry name" value="Benyvirus_P25"/>
    <property type="match status" value="1"/>
</dbReference>
<feature type="chain" id="PRO_0000412275" description="Protein P26">
    <location>
        <begin position="1"/>
        <end position="228"/>
    </location>
</feature>
<name>P26_BNYVS</name>
<reference key="1">
    <citation type="journal article" date="1996" name="J. Gen. Virol.">
        <title>Nucleotide sequence analysis of RNA-5 of five isolates of beet necrotic yellow vein virus and the identity of a deletion mutant.</title>
        <authorList>
            <person name="Kiguchi T."/>
            <person name="Saito M."/>
            <person name="Tamada T."/>
        </authorList>
    </citation>
    <scope>NUCLEOTIDE SEQUENCE [GENOMIC RNA]</scope>
</reference>
<reference key="2">
    <citation type="journal article" date="2005" name="J. Gen. Virol.">
        <title>Functional characterization of the Beet necrotic yellow vein virus RNA-5-encoded p26 protein: evidence for structural pathogenicity determinants.</title>
        <authorList>
            <person name="Link D."/>
            <person name="Schmidlin L."/>
            <person name="Schirmer A."/>
            <person name="Klein E."/>
            <person name="Erhardt M."/>
            <person name="Geldreich A."/>
            <person name="Lemaire O."/>
            <person name="Gilmer D."/>
        </authorList>
    </citation>
    <scope>FUNCTION</scope>
    <scope>SUBCELLULAR LOCATION</scope>
</reference>
<accession>Q96639</accession>
<accession>Q9YJL7</accession>
<organism>
    <name type="scientific">Beet necrotic yellow vein virus (isolate Japan/S)</name>
    <name type="common">BNYVV</name>
    <dbReference type="NCBI Taxonomy" id="652670"/>
    <lineage>
        <taxon>Viruses</taxon>
        <taxon>Riboviria</taxon>
        <taxon>Orthornavirae</taxon>
        <taxon>Kitrinoviricota</taxon>
        <taxon>Alsuviricetes</taxon>
        <taxon>Hepelivirales</taxon>
        <taxon>Benyviridae</taxon>
        <taxon>Benyvirus</taxon>
        <taxon>Beet necrotic yellow vein virus</taxon>
    </lineage>
</organism>
<comment type="function">
    <text evidence="1">Probably influences symptom severity in a synergistic fashion with P25.</text>
</comment>
<comment type="subcellular location">
    <subcellularLocation>
        <location evidence="1">Host nucleus</location>
    </subcellularLocation>
    <subcellularLocation>
        <location evidence="1">Host cytoplasm</location>
    </subcellularLocation>
</comment>
<comment type="similarity">
    <text evidence="2">Belongs to the benyvirus P25 protein family.</text>
</comment>
<protein>
    <recommendedName>
        <fullName>Protein P26</fullName>
    </recommendedName>
    <alternativeName>
        <fullName>26kDa protein</fullName>
    </alternativeName>
</protein>
<proteinExistence type="inferred from homology"/>